<protein>
    <recommendedName>
        <fullName>Histone chaperone RTT106</fullName>
    </recommendedName>
</protein>
<proteinExistence type="inferred from homology"/>
<evidence type="ECO:0000250" key="1"/>
<evidence type="ECO:0000256" key="2">
    <source>
        <dbReference type="SAM" id="MobiDB-lite"/>
    </source>
</evidence>
<evidence type="ECO:0000305" key="3"/>
<dbReference type="EMBL" id="GG704916">
    <property type="protein sequence ID" value="EAS33013.3"/>
    <property type="molecule type" value="Genomic_DNA"/>
</dbReference>
<dbReference type="RefSeq" id="XP_001244596.1">
    <property type="nucleotide sequence ID" value="XM_001244595.2"/>
</dbReference>
<dbReference type="SMR" id="Q1E076"/>
<dbReference type="STRING" id="246410.Q1E076"/>
<dbReference type="GeneID" id="4563413"/>
<dbReference type="KEGG" id="cim:CIMG_04037"/>
<dbReference type="VEuPathDB" id="FungiDB:CIMG_04037"/>
<dbReference type="InParanoid" id="Q1E076"/>
<dbReference type="OMA" id="AMPEAHR"/>
<dbReference type="OrthoDB" id="75754at2759"/>
<dbReference type="Proteomes" id="UP000001261">
    <property type="component" value="Unassembled WGS sequence"/>
</dbReference>
<dbReference type="GO" id="GO:0005694">
    <property type="term" value="C:chromosome"/>
    <property type="evidence" value="ECO:0007669"/>
    <property type="project" value="UniProtKB-SubCell"/>
</dbReference>
<dbReference type="GO" id="GO:0005634">
    <property type="term" value="C:nucleus"/>
    <property type="evidence" value="ECO:0007669"/>
    <property type="project" value="UniProtKB-SubCell"/>
</dbReference>
<dbReference type="GO" id="GO:0003677">
    <property type="term" value="F:DNA binding"/>
    <property type="evidence" value="ECO:0007669"/>
    <property type="project" value="UniProtKB-KW"/>
</dbReference>
<dbReference type="GO" id="GO:0042393">
    <property type="term" value="F:histone binding"/>
    <property type="evidence" value="ECO:0007669"/>
    <property type="project" value="TreeGrafter"/>
</dbReference>
<dbReference type="GO" id="GO:0031491">
    <property type="term" value="F:nucleosome binding"/>
    <property type="evidence" value="ECO:0007669"/>
    <property type="project" value="TreeGrafter"/>
</dbReference>
<dbReference type="Gene3D" id="2.30.29.120">
    <property type="match status" value="1"/>
</dbReference>
<dbReference type="Gene3D" id="2.30.29.30">
    <property type="entry name" value="Pleckstrin-homology domain (PH domain)/Phosphotyrosine-binding domain (PTB)"/>
    <property type="match status" value="1"/>
</dbReference>
<dbReference type="InterPro" id="IPR011993">
    <property type="entry name" value="PH-like_dom_sf"/>
</dbReference>
<dbReference type="InterPro" id="IPR013719">
    <property type="entry name" value="RTT106/SPT16-like_middle_dom"/>
</dbReference>
<dbReference type="InterPro" id="IPR050454">
    <property type="entry name" value="RTT106/SSRP1_HistChap/FACT"/>
</dbReference>
<dbReference type="PANTHER" id="PTHR45849">
    <property type="entry name" value="FACT COMPLEX SUBUNIT SSRP1"/>
    <property type="match status" value="1"/>
</dbReference>
<dbReference type="PANTHER" id="PTHR45849:SF3">
    <property type="entry name" value="HISTONE CHAPERONE RTT106"/>
    <property type="match status" value="1"/>
</dbReference>
<dbReference type="Pfam" id="PF08512">
    <property type="entry name" value="Rttp106-like_middle"/>
    <property type="match status" value="1"/>
</dbReference>
<dbReference type="SMART" id="SM01287">
    <property type="entry name" value="Rtt106"/>
    <property type="match status" value="1"/>
</dbReference>
<dbReference type="SUPFAM" id="SSF50729">
    <property type="entry name" value="PH domain-like"/>
    <property type="match status" value="1"/>
</dbReference>
<gene>
    <name type="primary">RTT106</name>
    <name type="ORF">CIMG_04037</name>
</gene>
<sequence length="455" mass="50306">MGFVSVNNSQIINKAFGPNQPLQQRIYQALAASPDLRPLFEDIAKYTSDLQDATSNAAAPPQPSRSQAQPVLGEGPAPKKRKIANGGDSIRSSSALAGMTQDADLQIYVQDMSFAVPQRKKLQLEITRAPGNVEYLRARNQALNMIEFGVPFPKIQHVLCLPVPEKSQKQFNFCIIPEGNDGISAAKPGEPVYETIVWTVPDGPPRTAFLGSGTPAMEGASLAETYQGYLQSILDEKLKHTRVICPDEKEFVSAIPEPHRKGEKAFHVKAFRGSKEGYMFLLSTGIFFGFKKPLIFFAFDNIESISYTSVLQRTFNLNILTRSSTNPDHMQEFELSMIDQADYPGIDAYVKKHRLQDASLVEARRAKSLNINGEKGENQEAHAEGTESELLKAQRELEDQEDEEEEDYDPGSDGDSDGSGTSSEEEDDHYGDEDHGEGRNLVKEELGSEAEDVEV</sequence>
<comment type="function">
    <text evidence="1">Histones H3 and H4 chaperone involved in the nucleosome formation and heterochromatin silencing. Required for the deposition of H3K56ac-carrying H3-H4 complex onto newly-replicated DNA. Plays a role in the transcriptional regulation of the cell-cycle dependent histone genes by creating a repressive structure at the core histone gene promoter (By similarity).</text>
</comment>
<comment type="subunit">
    <text evidence="1">Interacts with histones H3 and H4.</text>
</comment>
<comment type="subcellular location">
    <subcellularLocation>
        <location evidence="1">Nucleus</location>
    </subcellularLocation>
    <subcellularLocation>
        <location evidence="1">Chromosome</location>
    </subcellularLocation>
</comment>
<comment type="similarity">
    <text evidence="3">Belongs to the RTT106 family.</text>
</comment>
<feature type="chain" id="PRO_0000320490" description="Histone chaperone RTT106">
    <location>
        <begin position="1"/>
        <end position="455"/>
    </location>
</feature>
<feature type="region of interest" description="Disordered" evidence="2">
    <location>
        <begin position="51"/>
        <end position="93"/>
    </location>
</feature>
<feature type="region of interest" description="Disordered" evidence="2">
    <location>
        <begin position="371"/>
        <end position="455"/>
    </location>
</feature>
<feature type="compositionally biased region" description="Low complexity" evidence="2">
    <location>
        <begin position="55"/>
        <end position="70"/>
    </location>
</feature>
<feature type="compositionally biased region" description="Basic and acidic residues" evidence="2">
    <location>
        <begin position="374"/>
        <end position="397"/>
    </location>
</feature>
<feature type="compositionally biased region" description="Acidic residues" evidence="2">
    <location>
        <begin position="398"/>
        <end position="416"/>
    </location>
</feature>
<feature type="compositionally biased region" description="Basic and acidic residues" evidence="2">
    <location>
        <begin position="432"/>
        <end position="446"/>
    </location>
</feature>
<reference key="1">
    <citation type="journal article" date="2009" name="Genome Res.">
        <title>Comparative genomic analyses of the human fungal pathogens Coccidioides and their relatives.</title>
        <authorList>
            <person name="Sharpton T.J."/>
            <person name="Stajich J.E."/>
            <person name="Rounsley S.D."/>
            <person name="Gardner M.J."/>
            <person name="Wortman J.R."/>
            <person name="Jordar V.S."/>
            <person name="Maiti R."/>
            <person name="Kodira C.D."/>
            <person name="Neafsey D.E."/>
            <person name="Zeng Q."/>
            <person name="Hung C.-Y."/>
            <person name="McMahan C."/>
            <person name="Muszewska A."/>
            <person name="Grynberg M."/>
            <person name="Mandel M.A."/>
            <person name="Kellner E.M."/>
            <person name="Barker B.M."/>
            <person name="Galgiani J.N."/>
            <person name="Orbach M.J."/>
            <person name="Kirkland T.N."/>
            <person name="Cole G.T."/>
            <person name="Henn M.R."/>
            <person name="Birren B.W."/>
            <person name="Taylor J.W."/>
        </authorList>
    </citation>
    <scope>NUCLEOTIDE SEQUENCE [LARGE SCALE GENOMIC DNA]</scope>
    <source>
        <strain>RS</strain>
    </source>
</reference>
<reference key="2">
    <citation type="journal article" date="2010" name="Genome Res.">
        <title>Population genomic sequencing of Coccidioides fungi reveals recent hybridization and transposon control.</title>
        <authorList>
            <person name="Neafsey D.E."/>
            <person name="Barker B.M."/>
            <person name="Sharpton T.J."/>
            <person name="Stajich J.E."/>
            <person name="Park D.J."/>
            <person name="Whiston E."/>
            <person name="Hung C.-Y."/>
            <person name="McMahan C."/>
            <person name="White J."/>
            <person name="Sykes S."/>
            <person name="Heiman D."/>
            <person name="Young S."/>
            <person name="Zeng Q."/>
            <person name="Abouelleil A."/>
            <person name="Aftuck L."/>
            <person name="Bessette D."/>
            <person name="Brown A."/>
            <person name="FitzGerald M."/>
            <person name="Lui A."/>
            <person name="Macdonald J.P."/>
            <person name="Priest M."/>
            <person name="Orbach M.J."/>
            <person name="Galgiani J.N."/>
            <person name="Kirkland T.N."/>
            <person name="Cole G.T."/>
            <person name="Birren B.W."/>
            <person name="Henn M.R."/>
            <person name="Taylor J.W."/>
            <person name="Rounsley S.D."/>
        </authorList>
    </citation>
    <scope>GENOME REANNOTATION</scope>
    <source>
        <strain>RS</strain>
    </source>
</reference>
<organism>
    <name type="scientific">Coccidioides immitis (strain RS)</name>
    <name type="common">Valley fever fungus</name>
    <dbReference type="NCBI Taxonomy" id="246410"/>
    <lineage>
        <taxon>Eukaryota</taxon>
        <taxon>Fungi</taxon>
        <taxon>Dikarya</taxon>
        <taxon>Ascomycota</taxon>
        <taxon>Pezizomycotina</taxon>
        <taxon>Eurotiomycetes</taxon>
        <taxon>Eurotiomycetidae</taxon>
        <taxon>Onygenales</taxon>
        <taxon>Onygenaceae</taxon>
        <taxon>Coccidioides</taxon>
    </lineage>
</organism>
<keyword id="KW-0143">Chaperone</keyword>
<keyword id="KW-0158">Chromosome</keyword>
<keyword id="KW-0238">DNA-binding</keyword>
<keyword id="KW-0539">Nucleus</keyword>
<keyword id="KW-1185">Reference proteome</keyword>
<keyword id="KW-0804">Transcription</keyword>
<keyword id="KW-0805">Transcription regulation</keyword>
<name>RT106_COCIM</name>
<accession>Q1E076</accession>
<accession>J3KD28</accession>